<organism>
    <name type="scientific">Streptococcus gordonii (strain Challis / ATCC 35105 / BCRC 15272 / CH1 / DL1 / V288)</name>
    <dbReference type="NCBI Taxonomy" id="467705"/>
    <lineage>
        <taxon>Bacteria</taxon>
        <taxon>Bacillati</taxon>
        <taxon>Bacillota</taxon>
        <taxon>Bacilli</taxon>
        <taxon>Lactobacillales</taxon>
        <taxon>Streptococcaceae</taxon>
        <taxon>Streptococcus</taxon>
    </lineage>
</organism>
<accession>A8AWP5</accession>
<proteinExistence type="inferred from homology"/>
<feature type="chain" id="PRO_1000084233" description="3-isopropylmalate dehydratase large subunit">
    <location>
        <begin position="1"/>
        <end position="460"/>
    </location>
</feature>
<feature type="binding site" evidence="1">
    <location>
        <position position="338"/>
    </location>
    <ligand>
        <name>[4Fe-4S] cluster</name>
        <dbReference type="ChEBI" id="CHEBI:49883"/>
    </ligand>
</feature>
<feature type="binding site" evidence="1">
    <location>
        <position position="398"/>
    </location>
    <ligand>
        <name>[4Fe-4S] cluster</name>
        <dbReference type="ChEBI" id="CHEBI:49883"/>
    </ligand>
</feature>
<feature type="binding site" evidence="1">
    <location>
        <position position="401"/>
    </location>
    <ligand>
        <name>[4Fe-4S] cluster</name>
        <dbReference type="ChEBI" id="CHEBI:49883"/>
    </ligand>
</feature>
<evidence type="ECO:0000255" key="1">
    <source>
        <dbReference type="HAMAP-Rule" id="MF_01026"/>
    </source>
</evidence>
<gene>
    <name evidence="1" type="primary">leuC</name>
    <name type="ordered locus">SGO_0909</name>
</gene>
<dbReference type="EC" id="4.2.1.33" evidence="1"/>
<dbReference type="EMBL" id="CP000725">
    <property type="protein sequence ID" value="ABV10988.1"/>
    <property type="molecule type" value="Genomic_DNA"/>
</dbReference>
<dbReference type="RefSeq" id="WP_012000346.1">
    <property type="nucleotide sequence ID" value="NC_009785.1"/>
</dbReference>
<dbReference type="SMR" id="A8AWP5"/>
<dbReference type="STRING" id="467705.SGO_0909"/>
<dbReference type="KEGG" id="sgo:SGO_0909"/>
<dbReference type="eggNOG" id="COG0065">
    <property type="taxonomic scope" value="Bacteria"/>
</dbReference>
<dbReference type="HOGENOM" id="CLU_006714_3_4_9"/>
<dbReference type="UniPathway" id="UPA00048">
    <property type="reaction ID" value="UER00071"/>
</dbReference>
<dbReference type="Proteomes" id="UP000001131">
    <property type="component" value="Chromosome"/>
</dbReference>
<dbReference type="GO" id="GO:0003861">
    <property type="term" value="F:3-isopropylmalate dehydratase activity"/>
    <property type="evidence" value="ECO:0007669"/>
    <property type="project" value="UniProtKB-UniRule"/>
</dbReference>
<dbReference type="GO" id="GO:0051539">
    <property type="term" value="F:4 iron, 4 sulfur cluster binding"/>
    <property type="evidence" value="ECO:0007669"/>
    <property type="project" value="UniProtKB-KW"/>
</dbReference>
<dbReference type="GO" id="GO:0046872">
    <property type="term" value="F:metal ion binding"/>
    <property type="evidence" value="ECO:0007669"/>
    <property type="project" value="UniProtKB-KW"/>
</dbReference>
<dbReference type="GO" id="GO:0009098">
    <property type="term" value="P:L-leucine biosynthetic process"/>
    <property type="evidence" value="ECO:0007669"/>
    <property type="project" value="UniProtKB-UniRule"/>
</dbReference>
<dbReference type="CDD" id="cd01583">
    <property type="entry name" value="IPMI"/>
    <property type="match status" value="1"/>
</dbReference>
<dbReference type="Gene3D" id="3.30.499.10">
    <property type="entry name" value="Aconitase, domain 3"/>
    <property type="match status" value="2"/>
</dbReference>
<dbReference type="HAMAP" id="MF_01026">
    <property type="entry name" value="LeuC_type1"/>
    <property type="match status" value="1"/>
</dbReference>
<dbReference type="InterPro" id="IPR004430">
    <property type="entry name" value="3-IsopropMal_deHydase_lsu"/>
</dbReference>
<dbReference type="InterPro" id="IPR015931">
    <property type="entry name" value="Acnase/IPM_dHydase_lsu_aba_1/3"/>
</dbReference>
<dbReference type="InterPro" id="IPR001030">
    <property type="entry name" value="Acoase/IPM_deHydtase_lsu_aba"/>
</dbReference>
<dbReference type="InterPro" id="IPR018136">
    <property type="entry name" value="Aconitase_4Fe-4S_BS"/>
</dbReference>
<dbReference type="InterPro" id="IPR036008">
    <property type="entry name" value="Aconitase_4Fe-4S_dom"/>
</dbReference>
<dbReference type="InterPro" id="IPR050067">
    <property type="entry name" value="IPM_dehydratase_rel_enz"/>
</dbReference>
<dbReference type="InterPro" id="IPR033941">
    <property type="entry name" value="IPMI_cat"/>
</dbReference>
<dbReference type="NCBIfam" id="TIGR00170">
    <property type="entry name" value="leuC"/>
    <property type="match status" value="1"/>
</dbReference>
<dbReference type="NCBIfam" id="NF004016">
    <property type="entry name" value="PRK05478.1"/>
    <property type="match status" value="1"/>
</dbReference>
<dbReference type="NCBIfam" id="NF009116">
    <property type="entry name" value="PRK12466.1"/>
    <property type="match status" value="1"/>
</dbReference>
<dbReference type="PANTHER" id="PTHR43822:SF9">
    <property type="entry name" value="3-ISOPROPYLMALATE DEHYDRATASE"/>
    <property type="match status" value="1"/>
</dbReference>
<dbReference type="PANTHER" id="PTHR43822">
    <property type="entry name" value="HOMOACONITASE, MITOCHONDRIAL-RELATED"/>
    <property type="match status" value="1"/>
</dbReference>
<dbReference type="Pfam" id="PF00330">
    <property type="entry name" value="Aconitase"/>
    <property type="match status" value="1"/>
</dbReference>
<dbReference type="PRINTS" id="PR00415">
    <property type="entry name" value="ACONITASE"/>
</dbReference>
<dbReference type="SUPFAM" id="SSF53732">
    <property type="entry name" value="Aconitase iron-sulfur domain"/>
    <property type="match status" value="1"/>
</dbReference>
<dbReference type="PROSITE" id="PS00450">
    <property type="entry name" value="ACONITASE_1"/>
    <property type="match status" value="1"/>
</dbReference>
<dbReference type="PROSITE" id="PS01244">
    <property type="entry name" value="ACONITASE_2"/>
    <property type="match status" value="1"/>
</dbReference>
<protein>
    <recommendedName>
        <fullName evidence="1">3-isopropylmalate dehydratase large subunit</fullName>
        <ecNumber evidence="1">4.2.1.33</ecNumber>
    </recommendedName>
    <alternativeName>
        <fullName evidence="1">Alpha-IPM isomerase</fullName>
        <shortName evidence="1">IPMI</shortName>
    </alternativeName>
    <alternativeName>
        <fullName evidence="1">Isopropylmalate isomerase</fullName>
    </alternativeName>
</protein>
<comment type="function">
    <text evidence="1">Catalyzes the isomerization between 2-isopropylmalate and 3-isopropylmalate, via the formation of 2-isopropylmaleate.</text>
</comment>
<comment type="catalytic activity">
    <reaction evidence="1">
        <text>(2R,3S)-3-isopropylmalate = (2S)-2-isopropylmalate</text>
        <dbReference type="Rhea" id="RHEA:32287"/>
        <dbReference type="ChEBI" id="CHEBI:1178"/>
        <dbReference type="ChEBI" id="CHEBI:35121"/>
        <dbReference type="EC" id="4.2.1.33"/>
    </reaction>
</comment>
<comment type="cofactor">
    <cofactor evidence="1">
        <name>[4Fe-4S] cluster</name>
        <dbReference type="ChEBI" id="CHEBI:49883"/>
    </cofactor>
    <text evidence="1">Binds 1 [4Fe-4S] cluster per subunit.</text>
</comment>
<comment type="pathway">
    <text evidence="1">Amino-acid biosynthesis; L-leucine biosynthesis; L-leucine from 3-methyl-2-oxobutanoate: step 2/4.</text>
</comment>
<comment type="subunit">
    <text evidence="1">Heterodimer of LeuC and LeuD.</text>
</comment>
<comment type="similarity">
    <text evidence="1">Belongs to the aconitase/IPM isomerase family. LeuC type 1 subfamily.</text>
</comment>
<sequence>MAGKSIFDKLWERHVITGQEGQPQLMYVDQHYIHEVTSPQAFQGLRDAGRKVRRPDLTFGTFDHNVPTVNIYDIRDVISKAQIDKLSENVKDFGIEHAAHGSELQGIVHMVGPETGKTQPGKFIVCGDSHTATHGAFGAIAFGIGTSEVEHVFATQTIWQVKPKKMLVKFTGVPPKGVYSKDFILALIARYGVAAGVGHVVEYAGDAIEHLTMEERMTICNMSIEFGSKMGIMNPDQKTYDYVQGRPGAPKDFEAAVADWKTLVSDPDAVYDKVIEIDVSQLAPMVTWGTNPSMGVEFGAAFPEIRDMNDERAYNYMDLSPGKKAEDIDLGYIFIGSCTNARLSDLQLAAKFVAGKHIAPNLTAIVVPGSRPVKRVAEKMGLDKIFMDAGFEWRDPGCSMCLGMNPDKVPDGVHCASTSNRNFEDRQGFGAKTHLCSPAMAAAAAIAGRFVDIRQLPEVQ</sequence>
<keyword id="KW-0004">4Fe-4S</keyword>
<keyword id="KW-0028">Amino-acid biosynthesis</keyword>
<keyword id="KW-0100">Branched-chain amino acid biosynthesis</keyword>
<keyword id="KW-0408">Iron</keyword>
<keyword id="KW-0411">Iron-sulfur</keyword>
<keyword id="KW-0432">Leucine biosynthesis</keyword>
<keyword id="KW-0456">Lyase</keyword>
<keyword id="KW-0479">Metal-binding</keyword>
<keyword id="KW-1185">Reference proteome</keyword>
<name>LEUC_STRGC</name>
<reference key="1">
    <citation type="journal article" date="2007" name="J. Bacteriol.">
        <title>Genome-wide transcriptional changes in Streptococcus gordonii in response to competence signaling peptide.</title>
        <authorList>
            <person name="Vickerman M.M."/>
            <person name="Iobst S."/>
            <person name="Jesionowski A.M."/>
            <person name="Gill S.R."/>
        </authorList>
    </citation>
    <scope>NUCLEOTIDE SEQUENCE [LARGE SCALE GENOMIC DNA]</scope>
    <source>
        <strain>Challis / ATCC 35105 / BCRC 15272 / CH1 / DL1 / V288</strain>
    </source>
</reference>